<proteinExistence type="evidence at protein level"/>
<comment type="function">
    <text evidence="2">Has a role in meiosis.</text>
</comment>
<comment type="subcellular location">
    <subcellularLocation>
        <location evidence="3">Endoplasmic reticulum membrane</location>
        <topology evidence="3">Multi-pass membrane protein</topology>
    </subcellularLocation>
</comment>
<feature type="chain" id="PRO_0000278512" description="Meiotically up-regulated gene 162 protein">
    <location>
        <begin position="1"/>
        <end position="264"/>
    </location>
</feature>
<feature type="transmembrane region" description="Helical" evidence="1">
    <location>
        <begin position="18"/>
        <end position="38"/>
    </location>
</feature>
<feature type="transmembrane region" description="Helical" evidence="1">
    <location>
        <begin position="54"/>
        <end position="74"/>
    </location>
</feature>
<feature type="transmembrane region" description="Helical" evidence="1">
    <location>
        <begin position="84"/>
        <end position="104"/>
    </location>
</feature>
<feature type="transmembrane region" description="Helical" evidence="1">
    <location>
        <begin position="140"/>
        <end position="160"/>
    </location>
</feature>
<feature type="transmembrane region" description="Helical" evidence="1">
    <location>
        <begin position="174"/>
        <end position="194"/>
    </location>
</feature>
<feature type="transmembrane region" description="Helical" evidence="1">
    <location>
        <begin position="199"/>
        <end position="219"/>
    </location>
</feature>
<feature type="transmembrane region" description="Helical" evidence="1">
    <location>
        <begin position="223"/>
        <end position="243"/>
    </location>
</feature>
<name>MU162_SCHPO</name>
<organism>
    <name type="scientific">Schizosaccharomyces pombe (strain 972 / ATCC 24843)</name>
    <name type="common">Fission yeast</name>
    <dbReference type="NCBI Taxonomy" id="284812"/>
    <lineage>
        <taxon>Eukaryota</taxon>
        <taxon>Fungi</taxon>
        <taxon>Dikarya</taxon>
        <taxon>Ascomycota</taxon>
        <taxon>Taphrinomycotina</taxon>
        <taxon>Schizosaccharomycetes</taxon>
        <taxon>Schizosaccharomycetales</taxon>
        <taxon>Schizosaccharomycetaceae</taxon>
        <taxon>Schizosaccharomyces</taxon>
    </lineage>
</organism>
<gene>
    <name type="primary">mug162</name>
    <name type="ORF">SPAC11H11.02c</name>
</gene>
<keyword id="KW-0256">Endoplasmic reticulum</keyword>
<keyword id="KW-0469">Meiosis</keyword>
<keyword id="KW-0472">Membrane</keyword>
<keyword id="KW-1185">Reference proteome</keyword>
<keyword id="KW-0812">Transmembrane</keyword>
<keyword id="KW-1133">Transmembrane helix</keyword>
<accession>Q9UTP5</accession>
<dbReference type="EMBL" id="CU329670">
    <property type="protein sequence ID" value="CAB59798.1"/>
    <property type="molecule type" value="Genomic_DNA"/>
</dbReference>
<dbReference type="PIR" id="T37551">
    <property type="entry name" value="T37551"/>
</dbReference>
<dbReference type="RefSeq" id="NP_594720.1">
    <property type="nucleotide sequence ID" value="NM_001020148.2"/>
</dbReference>
<dbReference type="SMR" id="Q9UTP5"/>
<dbReference type="BioGRID" id="279452">
    <property type="interactions" value="1"/>
</dbReference>
<dbReference type="PaxDb" id="4896-SPAC11H11.02c.1"/>
<dbReference type="EnsemblFungi" id="SPAC11H11.02c.1">
    <property type="protein sequence ID" value="SPAC11H11.02c.1:pep"/>
    <property type="gene ID" value="SPAC11H11.02c"/>
</dbReference>
<dbReference type="GeneID" id="2543014"/>
<dbReference type="KEGG" id="spo:2543014"/>
<dbReference type="PomBase" id="SPAC11H11.02c">
    <property type="gene designation" value="mug162"/>
</dbReference>
<dbReference type="VEuPathDB" id="FungiDB:SPAC11H11.02c"/>
<dbReference type="HOGENOM" id="CLU_1046472_0_0_1"/>
<dbReference type="InParanoid" id="Q9UTP5"/>
<dbReference type="OMA" id="FQAIHYL"/>
<dbReference type="PRO" id="PR:Q9UTP5"/>
<dbReference type="Proteomes" id="UP000002485">
    <property type="component" value="Chromosome I"/>
</dbReference>
<dbReference type="GO" id="GO:0005783">
    <property type="term" value="C:endoplasmic reticulum"/>
    <property type="evidence" value="ECO:0007005"/>
    <property type="project" value="PomBase"/>
</dbReference>
<dbReference type="GO" id="GO:0005789">
    <property type="term" value="C:endoplasmic reticulum membrane"/>
    <property type="evidence" value="ECO:0007669"/>
    <property type="project" value="UniProtKB-SubCell"/>
</dbReference>
<dbReference type="GO" id="GO:0051321">
    <property type="term" value="P:meiotic cell cycle"/>
    <property type="evidence" value="ECO:0007669"/>
    <property type="project" value="UniProtKB-KW"/>
</dbReference>
<protein>
    <recommendedName>
        <fullName>Meiotically up-regulated gene 162 protein</fullName>
    </recommendedName>
</protein>
<evidence type="ECO:0000255" key="1"/>
<evidence type="ECO:0000269" key="2">
    <source>
    </source>
</evidence>
<evidence type="ECO:0000269" key="3">
    <source>
    </source>
</evidence>
<sequence>MDDEVYKQRLTALNNLRIVIFFDILIILLGYIGTWNLKTLQLVNPSLWSFSPSLWIYIRGTVLCADCIFTAGSANEYSAVQNSVFQVSSLMFYGLMMEFFGYSFDRVGCMELAFISFSAACYFNIRSIKSLSLKNKNWTIISIIEIPIKLHFILNVLLFLKFSEYMLPLLGRVHLSYHLFALWVINLYIWIKLIDSKDFVLGFLAGLSVLLLNTGSLITAKPLISYFNLLTSCLIIFPSIWIYAIEKKNFKNLSYEDDDYRNYW</sequence>
<reference key="1">
    <citation type="journal article" date="2002" name="Nature">
        <title>The genome sequence of Schizosaccharomyces pombe.</title>
        <authorList>
            <person name="Wood V."/>
            <person name="Gwilliam R."/>
            <person name="Rajandream M.A."/>
            <person name="Lyne M.H."/>
            <person name="Lyne R."/>
            <person name="Stewart A."/>
            <person name="Sgouros J.G."/>
            <person name="Peat N."/>
            <person name="Hayles J."/>
            <person name="Baker S.G."/>
            <person name="Basham D."/>
            <person name="Bowman S."/>
            <person name="Brooks K."/>
            <person name="Brown D."/>
            <person name="Brown S."/>
            <person name="Chillingworth T."/>
            <person name="Churcher C.M."/>
            <person name="Collins M."/>
            <person name="Connor R."/>
            <person name="Cronin A."/>
            <person name="Davis P."/>
            <person name="Feltwell T."/>
            <person name="Fraser A."/>
            <person name="Gentles S."/>
            <person name="Goble A."/>
            <person name="Hamlin N."/>
            <person name="Harris D.E."/>
            <person name="Hidalgo J."/>
            <person name="Hodgson G."/>
            <person name="Holroyd S."/>
            <person name="Hornsby T."/>
            <person name="Howarth S."/>
            <person name="Huckle E.J."/>
            <person name="Hunt S."/>
            <person name="Jagels K."/>
            <person name="James K.D."/>
            <person name="Jones L."/>
            <person name="Jones M."/>
            <person name="Leather S."/>
            <person name="McDonald S."/>
            <person name="McLean J."/>
            <person name="Mooney P."/>
            <person name="Moule S."/>
            <person name="Mungall K.L."/>
            <person name="Murphy L.D."/>
            <person name="Niblett D."/>
            <person name="Odell C."/>
            <person name="Oliver K."/>
            <person name="O'Neil S."/>
            <person name="Pearson D."/>
            <person name="Quail M.A."/>
            <person name="Rabbinowitsch E."/>
            <person name="Rutherford K.M."/>
            <person name="Rutter S."/>
            <person name="Saunders D."/>
            <person name="Seeger K."/>
            <person name="Sharp S."/>
            <person name="Skelton J."/>
            <person name="Simmonds M.N."/>
            <person name="Squares R."/>
            <person name="Squares S."/>
            <person name="Stevens K."/>
            <person name="Taylor K."/>
            <person name="Taylor R.G."/>
            <person name="Tivey A."/>
            <person name="Walsh S.V."/>
            <person name="Warren T."/>
            <person name="Whitehead S."/>
            <person name="Woodward J.R."/>
            <person name="Volckaert G."/>
            <person name="Aert R."/>
            <person name="Robben J."/>
            <person name="Grymonprez B."/>
            <person name="Weltjens I."/>
            <person name="Vanstreels E."/>
            <person name="Rieger M."/>
            <person name="Schaefer M."/>
            <person name="Mueller-Auer S."/>
            <person name="Gabel C."/>
            <person name="Fuchs M."/>
            <person name="Duesterhoeft A."/>
            <person name="Fritzc C."/>
            <person name="Holzer E."/>
            <person name="Moestl D."/>
            <person name="Hilbert H."/>
            <person name="Borzym K."/>
            <person name="Langer I."/>
            <person name="Beck A."/>
            <person name="Lehrach H."/>
            <person name="Reinhardt R."/>
            <person name="Pohl T.M."/>
            <person name="Eger P."/>
            <person name="Zimmermann W."/>
            <person name="Wedler H."/>
            <person name="Wambutt R."/>
            <person name="Purnelle B."/>
            <person name="Goffeau A."/>
            <person name="Cadieu E."/>
            <person name="Dreano S."/>
            <person name="Gloux S."/>
            <person name="Lelaure V."/>
            <person name="Mottier S."/>
            <person name="Galibert F."/>
            <person name="Aves S.J."/>
            <person name="Xiang Z."/>
            <person name="Hunt C."/>
            <person name="Moore K."/>
            <person name="Hurst S.M."/>
            <person name="Lucas M."/>
            <person name="Rochet M."/>
            <person name="Gaillardin C."/>
            <person name="Tallada V.A."/>
            <person name="Garzon A."/>
            <person name="Thode G."/>
            <person name="Daga R.R."/>
            <person name="Cruzado L."/>
            <person name="Jimenez J."/>
            <person name="Sanchez M."/>
            <person name="del Rey F."/>
            <person name="Benito J."/>
            <person name="Dominguez A."/>
            <person name="Revuelta J.L."/>
            <person name="Moreno S."/>
            <person name="Armstrong J."/>
            <person name="Forsburg S.L."/>
            <person name="Cerutti L."/>
            <person name="Lowe T."/>
            <person name="McCombie W.R."/>
            <person name="Paulsen I."/>
            <person name="Potashkin J."/>
            <person name="Shpakovski G.V."/>
            <person name="Ussery D."/>
            <person name="Barrell B.G."/>
            <person name="Nurse P."/>
        </authorList>
    </citation>
    <scope>NUCLEOTIDE SEQUENCE [LARGE SCALE GENOMIC DNA]</scope>
    <source>
        <strain>972 / ATCC 24843</strain>
    </source>
</reference>
<reference key="2">
    <citation type="journal article" date="2005" name="Curr. Biol.">
        <title>A large-scale screen in S. pombe identifies seven novel genes required for critical meiotic events.</title>
        <authorList>
            <person name="Martin-Castellanos C."/>
            <person name="Blanco M."/>
            <person name="Rozalen A.E."/>
            <person name="Perez-Hidalgo L."/>
            <person name="Garcia A.I."/>
            <person name="Conde F."/>
            <person name="Mata J."/>
            <person name="Ellermeier C."/>
            <person name="Davis L."/>
            <person name="San-Segundo P."/>
            <person name="Smith G.R."/>
            <person name="Moreno S."/>
        </authorList>
    </citation>
    <scope>FUNCTION IN MEIOSIS</scope>
</reference>
<reference key="3">
    <citation type="journal article" date="2006" name="Nat. Biotechnol.">
        <title>ORFeome cloning and global analysis of protein localization in the fission yeast Schizosaccharomyces pombe.</title>
        <authorList>
            <person name="Matsuyama A."/>
            <person name="Arai R."/>
            <person name="Yashiroda Y."/>
            <person name="Shirai A."/>
            <person name="Kamata A."/>
            <person name="Sekido S."/>
            <person name="Kobayashi Y."/>
            <person name="Hashimoto A."/>
            <person name="Hamamoto M."/>
            <person name="Hiraoka Y."/>
            <person name="Horinouchi S."/>
            <person name="Yoshida M."/>
        </authorList>
    </citation>
    <scope>SUBCELLULAR LOCATION [LARGE SCALE ANALYSIS]</scope>
</reference>